<feature type="chain" id="PRO_1000023229" description="Thymidylate kinase">
    <location>
        <begin position="1"/>
        <end position="211"/>
    </location>
</feature>
<feature type="binding site" evidence="1">
    <location>
        <begin position="7"/>
        <end position="14"/>
    </location>
    <ligand>
        <name>ATP</name>
        <dbReference type="ChEBI" id="CHEBI:30616"/>
    </ligand>
</feature>
<keyword id="KW-0067">ATP-binding</keyword>
<keyword id="KW-0418">Kinase</keyword>
<keyword id="KW-0545">Nucleotide biosynthesis</keyword>
<keyword id="KW-0547">Nucleotide-binding</keyword>
<keyword id="KW-0808">Transferase</keyword>
<evidence type="ECO:0000255" key="1">
    <source>
        <dbReference type="HAMAP-Rule" id="MF_00165"/>
    </source>
</evidence>
<accession>Q4AA79</accession>
<protein>
    <recommendedName>
        <fullName evidence="1">Thymidylate kinase</fullName>
        <ecNumber evidence="1">2.7.4.9</ecNumber>
    </recommendedName>
    <alternativeName>
        <fullName evidence="1">dTMP kinase</fullName>
    </alternativeName>
</protein>
<proteinExistence type="inferred from homology"/>
<sequence length="211" mass="24457">MFISFEGIDASGKSTVMDLFAKYLKIKFPEKEIVTTFEPGGKNLKEALQIREFLLSKNNQISPYVEMLLFATARRIHLERLIWPALKAGKIVLCDRYIDSSIAYQGFGNGLDIDLVTSLNSLISENTFPDLTIFLDIKISKAFERMGIFRDHNRDRLENRGVEFYEKVINGYEFLAKKNKNFFKIDGNGTYDEVLDLIIDFFEKYYASWPK</sequence>
<gene>
    <name evidence="1" type="primary">tmk</name>
    <name type="ordered locus">MHJ_0251</name>
</gene>
<organism>
    <name type="scientific">Mesomycoplasma hyopneumoniae (strain J / ATCC 25934 / NCTC 10110)</name>
    <name type="common">Mycoplasma hyopneumoniae</name>
    <dbReference type="NCBI Taxonomy" id="262719"/>
    <lineage>
        <taxon>Bacteria</taxon>
        <taxon>Bacillati</taxon>
        <taxon>Mycoplasmatota</taxon>
        <taxon>Mycoplasmoidales</taxon>
        <taxon>Metamycoplasmataceae</taxon>
        <taxon>Mesomycoplasma</taxon>
    </lineage>
</organism>
<comment type="function">
    <text evidence="1">Phosphorylation of dTMP to form dTDP in both de novo and salvage pathways of dTTP synthesis.</text>
</comment>
<comment type="catalytic activity">
    <reaction evidence="1">
        <text>dTMP + ATP = dTDP + ADP</text>
        <dbReference type="Rhea" id="RHEA:13517"/>
        <dbReference type="ChEBI" id="CHEBI:30616"/>
        <dbReference type="ChEBI" id="CHEBI:58369"/>
        <dbReference type="ChEBI" id="CHEBI:63528"/>
        <dbReference type="ChEBI" id="CHEBI:456216"/>
        <dbReference type="EC" id="2.7.4.9"/>
    </reaction>
</comment>
<comment type="similarity">
    <text evidence="1">Belongs to the thymidylate kinase family.</text>
</comment>
<name>KTHY_MESHJ</name>
<reference key="1">
    <citation type="journal article" date="2005" name="J. Bacteriol.">
        <title>Swine and poultry pathogens: the complete genome sequences of two strains of Mycoplasma hyopneumoniae and a strain of Mycoplasma synoviae.</title>
        <authorList>
            <person name="Vasconcelos A.T.R."/>
            <person name="Ferreira H.B."/>
            <person name="Bizarro C.V."/>
            <person name="Bonatto S.L."/>
            <person name="Carvalho M.O."/>
            <person name="Pinto P.M."/>
            <person name="Almeida D.F."/>
            <person name="Almeida L.G.P."/>
            <person name="Almeida R."/>
            <person name="Alves-Junior L."/>
            <person name="Assuncao E.N."/>
            <person name="Azevedo V.A.C."/>
            <person name="Bogo M.R."/>
            <person name="Brigido M.M."/>
            <person name="Brocchi M."/>
            <person name="Burity H.A."/>
            <person name="Camargo A.A."/>
            <person name="Camargo S.S."/>
            <person name="Carepo M.S."/>
            <person name="Carraro D.M."/>
            <person name="de Mattos Cascardo J.C."/>
            <person name="Castro L.A."/>
            <person name="Cavalcanti G."/>
            <person name="Chemale G."/>
            <person name="Collevatti R.G."/>
            <person name="Cunha C.W."/>
            <person name="Dallagiovanna B."/>
            <person name="Dambros B.P."/>
            <person name="Dellagostin O.A."/>
            <person name="Falcao C."/>
            <person name="Fantinatti-Garboggini F."/>
            <person name="Felipe M.S.S."/>
            <person name="Fiorentin L."/>
            <person name="Franco G.R."/>
            <person name="Freitas N.S.A."/>
            <person name="Frias D."/>
            <person name="Grangeiro T.B."/>
            <person name="Grisard E.C."/>
            <person name="Guimaraes C.T."/>
            <person name="Hungria M."/>
            <person name="Jardim S.N."/>
            <person name="Krieger M.A."/>
            <person name="Laurino J.P."/>
            <person name="Lima L.F.A."/>
            <person name="Lopes M.I."/>
            <person name="Loreto E.L.S."/>
            <person name="Madeira H.M.F."/>
            <person name="Manfio G.P."/>
            <person name="Maranhao A.Q."/>
            <person name="Martinkovics C.T."/>
            <person name="Medeiros S.R.B."/>
            <person name="Moreira M.A.M."/>
            <person name="Neiva M."/>
            <person name="Ramalho-Neto C.E."/>
            <person name="Nicolas M.F."/>
            <person name="Oliveira S.C."/>
            <person name="Paixao R.F.C."/>
            <person name="Pedrosa F.O."/>
            <person name="Pena S.D.J."/>
            <person name="Pereira M."/>
            <person name="Pereira-Ferrari L."/>
            <person name="Piffer I."/>
            <person name="Pinto L.S."/>
            <person name="Potrich D.P."/>
            <person name="Salim A.C.M."/>
            <person name="Santos F.R."/>
            <person name="Schmitt R."/>
            <person name="Schneider M.P.C."/>
            <person name="Schrank A."/>
            <person name="Schrank I.S."/>
            <person name="Schuck A.F."/>
            <person name="Seuanez H.N."/>
            <person name="Silva D.W."/>
            <person name="Silva R."/>
            <person name="Silva S.C."/>
            <person name="Soares C.M.A."/>
            <person name="Souza K.R.L."/>
            <person name="Souza R.C."/>
            <person name="Staats C.C."/>
            <person name="Steffens M.B.R."/>
            <person name="Teixeira S.M.R."/>
            <person name="Urmenyi T.P."/>
            <person name="Vainstein M.H."/>
            <person name="Zuccherato L.W."/>
            <person name="Simpson A.J.G."/>
            <person name="Zaha A."/>
        </authorList>
    </citation>
    <scope>NUCLEOTIDE SEQUENCE [LARGE SCALE GENOMIC DNA]</scope>
    <source>
        <strain>J / ATCC 25934 / NCTC 10110</strain>
    </source>
</reference>
<dbReference type="EC" id="2.7.4.9" evidence="1"/>
<dbReference type="EMBL" id="AE017243">
    <property type="protein sequence ID" value="AAZ44342.2"/>
    <property type="molecule type" value="Genomic_DNA"/>
</dbReference>
<dbReference type="RefSeq" id="WP_011205958.1">
    <property type="nucleotide sequence ID" value="NC_007295.1"/>
</dbReference>
<dbReference type="SMR" id="Q4AA79"/>
<dbReference type="GeneID" id="41334557"/>
<dbReference type="KEGG" id="mhj:MHJ_0251"/>
<dbReference type="eggNOG" id="COG0125">
    <property type="taxonomic scope" value="Bacteria"/>
</dbReference>
<dbReference type="HOGENOM" id="CLU_049131_0_2_14"/>
<dbReference type="OrthoDB" id="9774907at2"/>
<dbReference type="Proteomes" id="UP000000548">
    <property type="component" value="Chromosome"/>
</dbReference>
<dbReference type="GO" id="GO:0005829">
    <property type="term" value="C:cytosol"/>
    <property type="evidence" value="ECO:0007669"/>
    <property type="project" value="TreeGrafter"/>
</dbReference>
<dbReference type="GO" id="GO:0005524">
    <property type="term" value="F:ATP binding"/>
    <property type="evidence" value="ECO:0007669"/>
    <property type="project" value="UniProtKB-UniRule"/>
</dbReference>
<dbReference type="GO" id="GO:0004798">
    <property type="term" value="F:dTMP kinase activity"/>
    <property type="evidence" value="ECO:0007669"/>
    <property type="project" value="UniProtKB-UniRule"/>
</dbReference>
<dbReference type="GO" id="GO:0006233">
    <property type="term" value="P:dTDP biosynthetic process"/>
    <property type="evidence" value="ECO:0007669"/>
    <property type="project" value="InterPro"/>
</dbReference>
<dbReference type="GO" id="GO:0006235">
    <property type="term" value="P:dTTP biosynthetic process"/>
    <property type="evidence" value="ECO:0007669"/>
    <property type="project" value="UniProtKB-UniRule"/>
</dbReference>
<dbReference type="GO" id="GO:0006227">
    <property type="term" value="P:dUDP biosynthetic process"/>
    <property type="evidence" value="ECO:0007669"/>
    <property type="project" value="TreeGrafter"/>
</dbReference>
<dbReference type="CDD" id="cd01672">
    <property type="entry name" value="TMPK"/>
    <property type="match status" value="1"/>
</dbReference>
<dbReference type="FunFam" id="3.40.50.300:FF:000225">
    <property type="entry name" value="Thymidylate kinase"/>
    <property type="match status" value="1"/>
</dbReference>
<dbReference type="Gene3D" id="3.40.50.300">
    <property type="entry name" value="P-loop containing nucleotide triphosphate hydrolases"/>
    <property type="match status" value="1"/>
</dbReference>
<dbReference type="HAMAP" id="MF_00165">
    <property type="entry name" value="Thymidylate_kinase"/>
    <property type="match status" value="1"/>
</dbReference>
<dbReference type="InterPro" id="IPR027417">
    <property type="entry name" value="P-loop_NTPase"/>
</dbReference>
<dbReference type="InterPro" id="IPR039430">
    <property type="entry name" value="Thymidylate_kin-like_dom"/>
</dbReference>
<dbReference type="InterPro" id="IPR018095">
    <property type="entry name" value="Thymidylate_kin_CS"/>
</dbReference>
<dbReference type="InterPro" id="IPR018094">
    <property type="entry name" value="Thymidylate_kinase"/>
</dbReference>
<dbReference type="NCBIfam" id="TIGR00041">
    <property type="entry name" value="DTMP_kinase"/>
    <property type="match status" value="1"/>
</dbReference>
<dbReference type="PANTHER" id="PTHR10344">
    <property type="entry name" value="THYMIDYLATE KINASE"/>
    <property type="match status" value="1"/>
</dbReference>
<dbReference type="PANTHER" id="PTHR10344:SF4">
    <property type="entry name" value="UMP-CMP KINASE 2, MITOCHONDRIAL"/>
    <property type="match status" value="1"/>
</dbReference>
<dbReference type="Pfam" id="PF02223">
    <property type="entry name" value="Thymidylate_kin"/>
    <property type="match status" value="1"/>
</dbReference>
<dbReference type="SUPFAM" id="SSF52540">
    <property type="entry name" value="P-loop containing nucleoside triphosphate hydrolases"/>
    <property type="match status" value="1"/>
</dbReference>
<dbReference type="PROSITE" id="PS01331">
    <property type="entry name" value="THYMIDYLATE_KINASE"/>
    <property type="match status" value="1"/>
</dbReference>